<reference key="1">
    <citation type="journal article" date="2000" name="Nucleic Acids Res.">
        <title>Genome sequences of Chlamydia trachomatis MoPn and Chlamydia pneumoniae AR39.</title>
        <authorList>
            <person name="Read T.D."/>
            <person name="Brunham R.C."/>
            <person name="Shen C."/>
            <person name="Gill S.R."/>
            <person name="Heidelberg J.F."/>
            <person name="White O."/>
            <person name="Hickey E.K."/>
            <person name="Peterson J.D."/>
            <person name="Utterback T.R."/>
            <person name="Berry K.J."/>
            <person name="Bass S."/>
            <person name="Linher K.D."/>
            <person name="Weidman J.F."/>
            <person name="Khouri H.M."/>
            <person name="Craven B."/>
            <person name="Bowman C."/>
            <person name="Dodson R.J."/>
            <person name="Gwinn M.L."/>
            <person name="Nelson W.C."/>
            <person name="DeBoy R.T."/>
            <person name="Kolonay J.F."/>
            <person name="McClarty G."/>
            <person name="Salzberg S.L."/>
            <person name="Eisen J.A."/>
            <person name="Fraser C.M."/>
        </authorList>
    </citation>
    <scope>NUCLEOTIDE SEQUENCE [LARGE SCALE GENOMIC DNA]</scope>
    <source>
        <strain>MoPn / Nigg</strain>
    </source>
</reference>
<evidence type="ECO:0000255" key="1">
    <source>
        <dbReference type="HAMAP-Rule" id="MF_01367"/>
    </source>
</evidence>
<evidence type="ECO:0000305" key="2"/>
<name>RL14_CHLMU</name>
<sequence length="122" mass="13462">MIQQESQLKVADNTGAKKVKCFKVLGGSRRRYATVGDVIVCSVRDVEPDSSVKKGDVVKAVIVRTRNDIRRKDGSTLRFDTNSCVIIDDKGNPKGTRIFGPVAREIRDRGFIKISSLAPEVI</sequence>
<feature type="chain" id="PRO_0000128536" description="Large ribosomal subunit protein uL14">
    <location>
        <begin position="1"/>
        <end position="122"/>
    </location>
</feature>
<protein>
    <recommendedName>
        <fullName evidence="1">Large ribosomal subunit protein uL14</fullName>
    </recommendedName>
    <alternativeName>
        <fullName evidence="2">50S ribosomal protein L14</fullName>
    </alternativeName>
</protein>
<dbReference type="EMBL" id="AE002160">
    <property type="protein sequence ID" value="AAF39608.1"/>
    <property type="molecule type" value="Genomic_DNA"/>
</dbReference>
<dbReference type="PIR" id="E81664">
    <property type="entry name" value="E81664"/>
</dbReference>
<dbReference type="RefSeq" id="WP_010231626.1">
    <property type="nucleotide sequence ID" value="NZ_CP063055.1"/>
</dbReference>
<dbReference type="SMR" id="Q9PJM4"/>
<dbReference type="GeneID" id="93065357"/>
<dbReference type="KEGG" id="cmu:TC_0805"/>
<dbReference type="eggNOG" id="COG0093">
    <property type="taxonomic scope" value="Bacteria"/>
</dbReference>
<dbReference type="HOGENOM" id="CLU_095071_2_1_0"/>
<dbReference type="OrthoDB" id="9806379at2"/>
<dbReference type="Proteomes" id="UP000000800">
    <property type="component" value="Chromosome"/>
</dbReference>
<dbReference type="GO" id="GO:0022625">
    <property type="term" value="C:cytosolic large ribosomal subunit"/>
    <property type="evidence" value="ECO:0007669"/>
    <property type="project" value="TreeGrafter"/>
</dbReference>
<dbReference type="GO" id="GO:0070180">
    <property type="term" value="F:large ribosomal subunit rRNA binding"/>
    <property type="evidence" value="ECO:0007669"/>
    <property type="project" value="TreeGrafter"/>
</dbReference>
<dbReference type="GO" id="GO:0003735">
    <property type="term" value="F:structural constituent of ribosome"/>
    <property type="evidence" value="ECO:0007669"/>
    <property type="project" value="InterPro"/>
</dbReference>
<dbReference type="GO" id="GO:0006412">
    <property type="term" value="P:translation"/>
    <property type="evidence" value="ECO:0007669"/>
    <property type="project" value="UniProtKB-UniRule"/>
</dbReference>
<dbReference type="CDD" id="cd00337">
    <property type="entry name" value="Ribosomal_uL14"/>
    <property type="match status" value="1"/>
</dbReference>
<dbReference type="FunFam" id="2.40.150.20:FF:000001">
    <property type="entry name" value="50S ribosomal protein L14"/>
    <property type="match status" value="1"/>
</dbReference>
<dbReference type="Gene3D" id="2.40.150.20">
    <property type="entry name" value="Ribosomal protein L14"/>
    <property type="match status" value="1"/>
</dbReference>
<dbReference type="HAMAP" id="MF_01367">
    <property type="entry name" value="Ribosomal_uL14"/>
    <property type="match status" value="1"/>
</dbReference>
<dbReference type="InterPro" id="IPR000218">
    <property type="entry name" value="Ribosomal_uL14"/>
</dbReference>
<dbReference type="InterPro" id="IPR005745">
    <property type="entry name" value="Ribosomal_uL14_bac-type"/>
</dbReference>
<dbReference type="InterPro" id="IPR019972">
    <property type="entry name" value="Ribosomal_uL14_CS"/>
</dbReference>
<dbReference type="InterPro" id="IPR036853">
    <property type="entry name" value="Ribosomal_uL14_sf"/>
</dbReference>
<dbReference type="NCBIfam" id="TIGR01067">
    <property type="entry name" value="rplN_bact"/>
    <property type="match status" value="1"/>
</dbReference>
<dbReference type="PANTHER" id="PTHR11761">
    <property type="entry name" value="50S/60S RIBOSOMAL PROTEIN L14/L23"/>
    <property type="match status" value="1"/>
</dbReference>
<dbReference type="PANTHER" id="PTHR11761:SF3">
    <property type="entry name" value="LARGE RIBOSOMAL SUBUNIT PROTEIN UL14M"/>
    <property type="match status" value="1"/>
</dbReference>
<dbReference type="Pfam" id="PF00238">
    <property type="entry name" value="Ribosomal_L14"/>
    <property type="match status" value="1"/>
</dbReference>
<dbReference type="SMART" id="SM01374">
    <property type="entry name" value="Ribosomal_L14"/>
    <property type="match status" value="1"/>
</dbReference>
<dbReference type="SUPFAM" id="SSF50193">
    <property type="entry name" value="Ribosomal protein L14"/>
    <property type="match status" value="1"/>
</dbReference>
<dbReference type="PROSITE" id="PS00049">
    <property type="entry name" value="RIBOSOMAL_L14"/>
    <property type="match status" value="1"/>
</dbReference>
<gene>
    <name evidence="1" type="primary">rplN</name>
    <name type="ordered locus">TC_0805</name>
</gene>
<accession>Q9PJM4</accession>
<organism>
    <name type="scientific">Chlamydia muridarum (strain MoPn / Nigg)</name>
    <dbReference type="NCBI Taxonomy" id="243161"/>
    <lineage>
        <taxon>Bacteria</taxon>
        <taxon>Pseudomonadati</taxon>
        <taxon>Chlamydiota</taxon>
        <taxon>Chlamydiia</taxon>
        <taxon>Chlamydiales</taxon>
        <taxon>Chlamydiaceae</taxon>
        <taxon>Chlamydia/Chlamydophila group</taxon>
        <taxon>Chlamydia</taxon>
    </lineage>
</organism>
<comment type="function">
    <text evidence="1">Binds to 23S rRNA. Forms part of two intersubunit bridges in the 70S ribosome.</text>
</comment>
<comment type="subunit">
    <text evidence="1">Part of the 50S ribosomal subunit. Forms a cluster with proteins L3 and L19. In the 70S ribosome, L14 and L19 interact and together make contacts with the 16S rRNA in bridges B5 and B8.</text>
</comment>
<comment type="similarity">
    <text evidence="1">Belongs to the universal ribosomal protein uL14 family.</text>
</comment>
<keyword id="KW-0687">Ribonucleoprotein</keyword>
<keyword id="KW-0689">Ribosomal protein</keyword>
<keyword id="KW-0694">RNA-binding</keyword>
<keyword id="KW-0699">rRNA-binding</keyword>
<proteinExistence type="inferred from homology"/>